<organism>
    <name type="scientific">Helicobacter pylori (strain HPAG1)</name>
    <dbReference type="NCBI Taxonomy" id="357544"/>
    <lineage>
        <taxon>Bacteria</taxon>
        <taxon>Pseudomonadati</taxon>
        <taxon>Campylobacterota</taxon>
        <taxon>Epsilonproteobacteria</taxon>
        <taxon>Campylobacterales</taxon>
        <taxon>Helicobacteraceae</taxon>
        <taxon>Helicobacter</taxon>
    </lineage>
</organism>
<evidence type="ECO:0000255" key="1">
    <source>
        <dbReference type="HAMAP-Rule" id="MF_01393"/>
    </source>
</evidence>
<proteinExistence type="inferred from homology"/>
<accession>Q1CT41</accession>
<gene>
    <name evidence="1" type="primary">atpB</name>
    <name type="ordered locus">HPAG1_0814</name>
</gene>
<name>ATP6_HELPH</name>
<dbReference type="EMBL" id="CP000241">
    <property type="protein sequence ID" value="ABF84881.1"/>
    <property type="molecule type" value="Genomic_DNA"/>
</dbReference>
<dbReference type="RefSeq" id="WP_000401225.1">
    <property type="nucleotide sequence ID" value="NC_008086.1"/>
</dbReference>
<dbReference type="SMR" id="Q1CT41"/>
<dbReference type="KEGG" id="hpa:HPAG1_0814"/>
<dbReference type="HOGENOM" id="CLU_041018_2_2_7"/>
<dbReference type="GO" id="GO:0005886">
    <property type="term" value="C:plasma membrane"/>
    <property type="evidence" value="ECO:0007669"/>
    <property type="project" value="UniProtKB-SubCell"/>
</dbReference>
<dbReference type="GO" id="GO:0045259">
    <property type="term" value="C:proton-transporting ATP synthase complex"/>
    <property type="evidence" value="ECO:0007669"/>
    <property type="project" value="UniProtKB-KW"/>
</dbReference>
<dbReference type="GO" id="GO:0046933">
    <property type="term" value="F:proton-transporting ATP synthase activity, rotational mechanism"/>
    <property type="evidence" value="ECO:0007669"/>
    <property type="project" value="UniProtKB-UniRule"/>
</dbReference>
<dbReference type="GO" id="GO:0042777">
    <property type="term" value="P:proton motive force-driven plasma membrane ATP synthesis"/>
    <property type="evidence" value="ECO:0007669"/>
    <property type="project" value="TreeGrafter"/>
</dbReference>
<dbReference type="CDD" id="cd00310">
    <property type="entry name" value="ATP-synt_Fo_a_6"/>
    <property type="match status" value="1"/>
</dbReference>
<dbReference type="FunFam" id="1.20.120.220:FF:000006">
    <property type="entry name" value="ATP synthase subunit a"/>
    <property type="match status" value="1"/>
</dbReference>
<dbReference type="Gene3D" id="1.20.120.220">
    <property type="entry name" value="ATP synthase, F0 complex, subunit A"/>
    <property type="match status" value="1"/>
</dbReference>
<dbReference type="HAMAP" id="MF_01393">
    <property type="entry name" value="ATP_synth_a_bact"/>
    <property type="match status" value="1"/>
</dbReference>
<dbReference type="InterPro" id="IPR045082">
    <property type="entry name" value="ATP_syn_F0_a_bact/chloroplast"/>
</dbReference>
<dbReference type="InterPro" id="IPR000568">
    <property type="entry name" value="ATP_synth_F0_asu"/>
</dbReference>
<dbReference type="InterPro" id="IPR023011">
    <property type="entry name" value="ATP_synth_F0_asu_AS"/>
</dbReference>
<dbReference type="InterPro" id="IPR035908">
    <property type="entry name" value="F0_ATP_A_sf"/>
</dbReference>
<dbReference type="NCBIfam" id="TIGR01131">
    <property type="entry name" value="ATP_synt_6_or_A"/>
    <property type="match status" value="1"/>
</dbReference>
<dbReference type="NCBIfam" id="NF004481">
    <property type="entry name" value="PRK05815.2-3"/>
    <property type="match status" value="1"/>
</dbReference>
<dbReference type="PANTHER" id="PTHR42823">
    <property type="entry name" value="ATP SYNTHASE SUBUNIT A, CHLOROPLASTIC"/>
    <property type="match status" value="1"/>
</dbReference>
<dbReference type="PANTHER" id="PTHR42823:SF3">
    <property type="entry name" value="ATP SYNTHASE SUBUNIT A, CHLOROPLASTIC"/>
    <property type="match status" value="1"/>
</dbReference>
<dbReference type="Pfam" id="PF00119">
    <property type="entry name" value="ATP-synt_A"/>
    <property type="match status" value="1"/>
</dbReference>
<dbReference type="PRINTS" id="PR00123">
    <property type="entry name" value="ATPASEA"/>
</dbReference>
<dbReference type="SUPFAM" id="SSF81336">
    <property type="entry name" value="F1F0 ATP synthase subunit A"/>
    <property type="match status" value="1"/>
</dbReference>
<dbReference type="PROSITE" id="PS00449">
    <property type="entry name" value="ATPASE_A"/>
    <property type="match status" value="1"/>
</dbReference>
<sequence>MEHRVFTIANFFSSNHDFITGFFVVLTAVLMFLISLGASRKMQMVPMGLQNVYESIISAILSVAKDIIGEELARKYFPLAGTIALYVFFSNMIGIIPGFESPTASWSFTLVLALIVFFYYHFEGIRVQGFFKYFAHFAGPVKWLAPFMFPIEIISHFSRIVSLSFRLFGNIKGDDMFLLIMLLLVPWAVPVAPFMVLFFMGILQAFVFMILTYVYLAGAVLTDEGH</sequence>
<comment type="function">
    <text evidence="1">Key component of the proton channel; it plays a direct role in the translocation of protons across the membrane.</text>
</comment>
<comment type="subunit">
    <text evidence="1">F-type ATPases have 2 components, CF(1) - the catalytic core - and CF(0) - the membrane proton channel. CF(1) has five subunits: alpha(3), beta(3), gamma(1), delta(1), epsilon(1). CF(0) has three main subunits: a(1), b(2) and c(9-12). The alpha and beta chains form an alternating ring which encloses part of the gamma chain. CF(1) is attached to CF(0) by a central stalk formed by the gamma and epsilon chains, while a peripheral stalk is formed by the delta and b chains.</text>
</comment>
<comment type="subcellular location">
    <subcellularLocation>
        <location evidence="1">Cell inner membrane</location>
        <topology evidence="1">Multi-pass membrane protein</topology>
    </subcellularLocation>
</comment>
<comment type="similarity">
    <text evidence="1">Belongs to the ATPase A chain family.</text>
</comment>
<keyword id="KW-0066">ATP synthesis</keyword>
<keyword id="KW-0997">Cell inner membrane</keyword>
<keyword id="KW-1003">Cell membrane</keyword>
<keyword id="KW-0138">CF(0)</keyword>
<keyword id="KW-0375">Hydrogen ion transport</keyword>
<keyword id="KW-0406">Ion transport</keyword>
<keyword id="KW-0472">Membrane</keyword>
<keyword id="KW-0812">Transmembrane</keyword>
<keyword id="KW-1133">Transmembrane helix</keyword>
<keyword id="KW-0813">Transport</keyword>
<protein>
    <recommendedName>
        <fullName evidence="1">ATP synthase subunit a</fullName>
    </recommendedName>
    <alternativeName>
        <fullName evidence="1">ATP synthase F0 sector subunit a</fullName>
    </alternativeName>
    <alternativeName>
        <fullName evidence="1">F-ATPase subunit 6</fullName>
    </alternativeName>
</protein>
<reference key="1">
    <citation type="journal article" date="2006" name="Proc. Natl. Acad. Sci. U.S.A.">
        <title>The complete genome sequence of a chronic atrophic gastritis Helicobacter pylori strain: evolution during disease progression.</title>
        <authorList>
            <person name="Oh J.D."/>
            <person name="Kling-Baeckhed H."/>
            <person name="Giannakis M."/>
            <person name="Xu J."/>
            <person name="Fulton R.S."/>
            <person name="Fulton L.A."/>
            <person name="Cordum H.S."/>
            <person name="Wang C."/>
            <person name="Elliott G."/>
            <person name="Edwards J."/>
            <person name="Mardis E.R."/>
            <person name="Engstrand L.G."/>
            <person name="Gordon J.I."/>
        </authorList>
    </citation>
    <scope>NUCLEOTIDE SEQUENCE [LARGE SCALE GENOMIC DNA]</scope>
    <source>
        <strain>HPAG1</strain>
    </source>
</reference>
<feature type="chain" id="PRO_0000362330" description="ATP synthase subunit a">
    <location>
        <begin position="1"/>
        <end position="226"/>
    </location>
</feature>
<feature type="transmembrane region" description="Helical" evidence="1">
    <location>
        <begin position="18"/>
        <end position="38"/>
    </location>
</feature>
<feature type="transmembrane region" description="Helical" evidence="1">
    <location>
        <begin position="79"/>
        <end position="99"/>
    </location>
</feature>
<feature type="transmembrane region" description="Helical" evidence="1">
    <location>
        <begin position="105"/>
        <end position="125"/>
    </location>
</feature>
<feature type="transmembrane region" description="Helical" evidence="1">
    <location>
        <begin position="134"/>
        <end position="154"/>
    </location>
</feature>
<feature type="transmembrane region" description="Helical" evidence="1">
    <location>
        <begin position="179"/>
        <end position="199"/>
    </location>
</feature>
<feature type="transmembrane region" description="Helical" evidence="1">
    <location>
        <begin position="201"/>
        <end position="221"/>
    </location>
</feature>